<proteinExistence type="inferred from homology"/>
<keyword id="KW-0030">Aminoacyl-tRNA synthetase</keyword>
<keyword id="KW-0067">ATP-binding</keyword>
<keyword id="KW-0963">Cytoplasm</keyword>
<keyword id="KW-0436">Ligase</keyword>
<keyword id="KW-0547">Nucleotide-binding</keyword>
<keyword id="KW-0648">Protein biosynthesis</keyword>
<keyword id="KW-1185">Reference proteome</keyword>
<comment type="catalytic activity">
    <reaction evidence="1">
        <text>tRNA(Gly) + glycine + ATP = glycyl-tRNA(Gly) + AMP + diphosphate</text>
        <dbReference type="Rhea" id="RHEA:16013"/>
        <dbReference type="Rhea" id="RHEA-COMP:9664"/>
        <dbReference type="Rhea" id="RHEA-COMP:9683"/>
        <dbReference type="ChEBI" id="CHEBI:30616"/>
        <dbReference type="ChEBI" id="CHEBI:33019"/>
        <dbReference type="ChEBI" id="CHEBI:57305"/>
        <dbReference type="ChEBI" id="CHEBI:78442"/>
        <dbReference type="ChEBI" id="CHEBI:78522"/>
        <dbReference type="ChEBI" id="CHEBI:456215"/>
        <dbReference type="EC" id="6.1.1.14"/>
    </reaction>
</comment>
<comment type="subunit">
    <text evidence="1">Tetramer of two alpha and two beta subunits.</text>
</comment>
<comment type="subcellular location">
    <subcellularLocation>
        <location evidence="1">Cytoplasm</location>
    </subcellularLocation>
</comment>
<comment type="similarity">
    <text evidence="1">Belongs to the class-II aminoacyl-tRNA synthetase family.</text>
</comment>
<accession>Q88RR8</accession>
<feature type="chain" id="PRO_0000072855" description="Glycine--tRNA ligase alpha subunit">
    <location>
        <begin position="1"/>
        <end position="315"/>
    </location>
</feature>
<organism>
    <name type="scientific">Pseudomonas putida (strain ATCC 47054 / DSM 6125 / CFBP 8728 / NCIMB 11950 / KT2440)</name>
    <dbReference type="NCBI Taxonomy" id="160488"/>
    <lineage>
        <taxon>Bacteria</taxon>
        <taxon>Pseudomonadati</taxon>
        <taxon>Pseudomonadota</taxon>
        <taxon>Gammaproteobacteria</taxon>
        <taxon>Pseudomonadales</taxon>
        <taxon>Pseudomonadaceae</taxon>
        <taxon>Pseudomonas</taxon>
    </lineage>
</organism>
<protein>
    <recommendedName>
        <fullName evidence="1">Glycine--tRNA ligase alpha subunit</fullName>
        <ecNumber evidence="1">6.1.1.14</ecNumber>
    </recommendedName>
    <alternativeName>
        <fullName evidence="1">Glycyl-tRNA synthetase alpha subunit</fullName>
        <shortName evidence="1">GlyRS</shortName>
    </alternativeName>
</protein>
<evidence type="ECO:0000255" key="1">
    <source>
        <dbReference type="HAMAP-Rule" id="MF_00254"/>
    </source>
</evidence>
<dbReference type="EC" id="6.1.1.14" evidence="1"/>
<dbReference type="EMBL" id="AE015451">
    <property type="protein sequence ID" value="AAN65695.1"/>
    <property type="molecule type" value="Genomic_DNA"/>
</dbReference>
<dbReference type="RefSeq" id="NP_742231.1">
    <property type="nucleotide sequence ID" value="NC_002947.4"/>
</dbReference>
<dbReference type="RefSeq" id="WP_003253126.1">
    <property type="nucleotide sequence ID" value="NZ_CP169744.1"/>
</dbReference>
<dbReference type="SMR" id="Q88RR8"/>
<dbReference type="STRING" id="160488.PP_0061"/>
<dbReference type="PaxDb" id="160488-PP_0061"/>
<dbReference type="GeneID" id="83677305"/>
<dbReference type="KEGG" id="ppu:PP_0061"/>
<dbReference type="PATRIC" id="fig|160488.4.peg.66"/>
<dbReference type="eggNOG" id="COG0752">
    <property type="taxonomic scope" value="Bacteria"/>
</dbReference>
<dbReference type="HOGENOM" id="CLU_057066_1_0_6"/>
<dbReference type="OrthoDB" id="9802183at2"/>
<dbReference type="PhylomeDB" id="Q88RR8"/>
<dbReference type="BioCyc" id="PPUT160488:G1G01-64-MONOMER"/>
<dbReference type="Proteomes" id="UP000000556">
    <property type="component" value="Chromosome"/>
</dbReference>
<dbReference type="GO" id="GO:0005829">
    <property type="term" value="C:cytosol"/>
    <property type="evidence" value="ECO:0007669"/>
    <property type="project" value="TreeGrafter"/>
</dbReference>
<dbReference type="GO" id="GO:0005524">
    <property type="term" value="F:ATP binding"/>
    <property type="evidence" value="ECO:0007669"/>
    <property type="project" value="UniProtKB-UniRule"/>
</dbReference>
<dbReference type="GO" id="GO:0004820">
    <property type="term" value="F:glycine-tRNA ligase activity"/>
    <property type="evidence" value="ECO:0007669"/>
    <property type="project" value="UniProtKB-UniRule"/>
</dbReference>
<dbReference type="GO" id="GO:0006426">
    <property type="term" value="P:glycyl-tRNA aminoacylation"/>
    <property type="evidence" value="ECO:0007669"/>
    <property type="project" value="UniProtKB-UniRule"/>
</dbReference>
<dbReference type="CDD" id="cd00733">
    <property type="entry name" value="GlyRS_alpha_core"/>
    <property type="match status" value="1"/>
</dbReference>
<dbReference type="FunFam" id="3.30.930.10:FF:000006">
    <property type="entry name" value="Glycine--tRNA ligase alpha subunit"/>
    <property type="match status" value="1"/>
</dbReference>
<dbReference type="Gene3D" id="3.30.930.10">
    <property type="entry name" value="Bira Bifunctional Protein, Domain 2"/>
    <property type="match status" value="1"/>
</dbReference>
<dbReference type="Gene3D" id="1.20.58.180">
    <property type="entry name" value="Class II aaRS and biotin synthetases, domain 2"/>
    <property type="match status" value="1"/>
</dbReference>
<dbReference type="HAMAP" id="MF_00254">
    <property type="entry name" value="Gly_tRNA_synth_alpha"/>
    <property type="match status" value="1"/>
</dbReference>
<dbReference type="InterPro" id="IPR045864">
    <property type="entry name" value="aa-tRNA-synth_II/BPL/LPL"/>
</dbReference>
<dbReference type="InterPro" id="IPR006194">
    <property type="entry name" value="Gly-tRNA-synth_heterodimer"/>
</dbReference>
<dbReference type="InterPro" id="IPR002310">
    <property type="entry name" value="Gly-tRNA_ligase_asu"/>
</dbReference>
<dbReference type="NCBIfam" id="TIGR00388">
    <property type="entry name" value="glyQ"/>
    <property type="match status" value="1"/>
</dbReference>
<dbReference type="NCBIfam" id="NF006827">
    <property type="entry name" value="PRK09348.1"/>
    <property type="match status" value="1"/>
</dbReference>
<dbReference type="PANTHER" id="PTHR30075:SF2">
    <property type="entry name" value="GLYCINE--TRNA LIGASE, CHLOROPLASTIC_MITOCHONDRIAL 2"/>
    <property type="match status" value="1"/>
</dbReference>
<dbReference type="PANTHER" id="PTHR30075">
    <property type="entry name" value="GLYCYL-TRNA SYNTHETASE"/>
    <property type="match status" value="1"/>
</dbReference>
<dbReference type="Pfam" id="PF02091">
    <property type="entry name" value="tRNA-synt_2e"/>
    <property type="match status" value="1"/>
</dbReference>
<dbReference type="PRINTS" id="PR01044">
    <property type="entry name" value="TRNASYNTHGA"/>
</dbReference>
<dbReference type="SUPFAM" id="SSF55681">
    <property type="entry name" value="Class II aaRS and biotin synthetases"/>
    <property type="match status" value="1"/>
</dbReference>
<dbReference type="PROSITE" id="PS50861">
    <property type="entry name" value="AA_TRNA_LIGASE_II_GLYAB"/>
    <property type="match status" value="1"/>
</dbReference>
<name>SYGA_PSEPK</name>
<reference key="1">
    <citation type="journal article" date="2002" name="Environ. Microbiol.">
        <title>Complete genome sequence and comparative analysis of the metabolically versatile Pseudomonas putida KT2440.</title>
        <authorList>
            <person name="Nelson K.E."/>
            <person name="Weinel C."/>
            <person name="Paulsen I.T."/>
            <person name="Dodson R.J."/>
            <person name="Hilbert H."/>
            <person name="Martins dos Santos V.A.P."/>
            <person name="Fouts D.E."/>
            <person name="Gill S.R."/>
            <person name="Pop M."/>
            <person name="Holmes M."/>
            <person name="Brinkac L.M."/>
            <person name="Beanan M.J."/>
            <person name="DeBoy R.T."/>
            <person name="Daugherty S.C."/>
            <person name="Kolonay J.F."/>
            <person name="Madupu R."/>
            <person name="Nelson W.C."/>
            <person name="White O."/>
            <person name="Peterson J.D."/>
            <person name="Khouri H.M."/>
            <person name="Hance I."/>
            <person name="Chris Lee P."/>
            <person name="Holtzapple E.K."/>
            <person name="Scanlan D."/>
            <person name="Tran K."/>
            <person name="Moazzez A."/>
            <person name="Utterback T.R."/>
            <person name="Rizzo M."/>
            <person name="Lee K."/>
            <person name="Kosack D."/>
            <person name="Moestl D."/>
            <person name="Wedler H."/>
            <person name="Lauber J."/>
            <person name="Stjepandic D."/>
            <person name="Hoheisel J."/>
            <person name="Straetz M."/>
            <person name="Heim S."/>
            <person name="Kiewitz C."/>
            <person name="Eisen J.A."/>
            <person name="Timmis K.N."/>
            <person name="Duesterhoeft A."/>
            <person name="Tuemmler B."/>
            <person name="Fraser C.M."/>
        </authorList>
    </citation>
    <scope>NUCLEOTIDE SEQUENCE [LARGE SCALE GENOMIC DNA]</scope>
    <source>
        <strain>ATCC 47054 / DSM 6125 / CFBP 8728 / NCIMB 11950 / KT2440</strain>
    </source>
</reference>
<sequence length="315" mass="36024">MSQPTPAVRTFQDLILALQNYWAAQGCVVLQPYDMEVGAGTFHTATFLRAVGPETWNAAYVQPSRRPADGRYGENPNRLQHYYQFQVVLKPNPANFQELYLGSLKAIGLDPLVHDIRFVEDNWESPTLGAWGLGWEIWLNGMEVTQFTYFQQVGGIECYPVTGEITYGLERLAMYIQGVDSVYDLVWADGPFGKVTYGDVFHQNEVEQSTYNFEHANVDKLFELFDFYESEANRLIKLELPLPTYEMVLKASHTFNLLDARRAISVTERQRYILRVRTLARDVAQSYLQARARLGFPMATPELRDEVLAKLEAAQ</sequence>
<gene>
    <name evidence="1" type="primary">glyQ</name>
    <name type="ordered locus">PP_0061</name>
</gene>